<reference key="1">
    <citation type="submission" date="2005-07" db="EMBL/GenBank/DDBJ databases">
        <title>Complete sequence of Synechococcus sp. CC9605.</title>
        <authorList>
            <consortium name="US DOE Joint Genome Institute"/>
            <person name="Copeland A."/>
            <person name="Lucas S."/>
            <person name="Lapidus A."/>
            <person name="Barry K."/>
            <person name="Detter J.C."/>
            <person name="Glavina T."/>
            <person name="Hammon N."/>
            <person name="Israni S."/>
            <person name="Pitluck S."/>
            <person name="Schmutz J."/>
            <person name="Martinez M."/>
            <person name="Larimer F."/>
            <person name="Land M."/>
            <person name="Kyrpides N."/>
            <person name="Ivanova N."/>
            <person name="Richardson P."/>
        </authorList>
    </citation>
    <scope>NUCLEOTIDE SEQUENCE [LARGE SCALE GENOMIC DNA]</scope>
    <source>
        <strain>CC9605</strain>
    </source>
</reference>
<proteinExistence type="inferred from homology"/>
<feature type="chain" id="PRO_1000137636" description="Protein GrpE">
    <location>
        <begin position="1"/>
        <end position="225"/>
    </location>
</feature>
<feature type="region of interest" description="Disordered" evidence="2">
    <location>
        <begin position="1"/>
        <end position="48"/>
    </location>
</feature>
<feature type="region of interest" description="Disordered" evidence="2">
    <location>
        <begin position="198"/>
        <end position="225"/>
    </location>
</feature>
<feature type="compositionally biased region" description="Polar residues" evidence="2">
    <location>
        <begin position="1"/>
        <end position="15"/>
    </location>
</feature>
<feature type="compositionally biased region" description="Low complexity" evidence="2">
    <location>
        <begin position="201"/>
        <end position="225"/>
    </location>
</feature>
<protein>
    <recommendedName>
        <fullName evidence="1">Protein GrpE</fullName>
    </recommendedName>
    <alternativeName>
        <fullName evidence="1">HSP-70 cofactor</fullName>
    </alternativeName>
</protein>
<sequence>MSGDASTPEQDQNVVSGAVPATRESSPDAPEATSEQASAAVDPADRMQQLEQELSALKQEHDTLNSQYMRIAADFDNFRKRQSRDQDDMRKQLVCSTLTEILPVVDNFERARQQLNPEGEEAQALHRSYQGLYKQLVEVLKQQGVARMDVVGQEFDPNLHEAVLREESSEFAEDVVSEELQRGYHRDGRVLRHAMVKVSMGPGPSDPGSAPAEAAAAPDQTAEEA</sequence>
<evidence type="ECO:0000255" key="1">
    <source>
        <dbReference type="HAMAP-Rule" id="MF_01151"/>
    </source>
</evidence>
<evidence type="ECO:0000256" key="2">
    <source>
        <dbReference type="SAM" id="MobiDB-lite"/>
    </source>
</evidence>
<gene>
    <name evidence="1" type="primary">grpE</name>
    <name type="ordered locus">Syncc9605_0023</name>
</gene>
<accession>Q3ANN0</accession>
<keyword id="KW-0143">Chaperone</keyword>
<keyword id="KW-0963">Cytoplasm</keyword>
<keyword id="KW-0346">Stress response</keyword>
<name>GRPE_SYNSC</name>
<comment type="function">
    <text evidence="1">Participates actively in the response to hyperosmotic and heat shock by preventing the aggregation of stress-denatured proteins, in association with DnaK and GrpE. It is the nucleotide exchange factor for DnaK and may function as a thermosensor. Unfolded proteins bind initially to DnaJ; upon interaction with the DnaJ-bound protein, DnaK hydrolyzes its bound ATP, resulting in the formation of a stable complex. GrpE releases ADP from DnaK; ATP binding to DnaK triggers the release of the substrate protein, thus completing the reaction cycle. Several rounds of ATP-dependent interactions between DnaJ, DnaK and GrpE are required for fully efficient folding.</text>
</comment>
<comment type="subunit">
    <text evidence="1">Homodimer.</text>
</comment>
<comment type="subcellular location">
    <subcellularLocation>
        <location evidence="1">Cytoplasm</location>
    </subcellularLocation>
</comment>
<comment type="similarity">
    <text evidence="1">Belongs to the GrpE family.</text>
</comment>
<organism>
    <name type="scientific">Synechococcus sp. (strain CC9605)</name>
    <dbReference type="NCBI Taxonomy" id="110662"/>
    <lineage>
        <taxon>Bacteria</taxon>
        <taxon>Bacillati</taxon>
        <taxon>Cyanobacteriota</taxon>
        <taxon>Cyanophyceae</taxon>
        <taxon>Synechococcales</taxon>
        <taxon>Synechococcaceae</taxon>
        <taxon>Synechococcus</taxon>
    </lineage>
</organism>
<dbReference type="EMBL" id="CP000110">
    <property type="protein sequence ID" value="ABB33802.1"/>
    <property type="molecule type" value="Genomic_DNA"/>
</dbReference>
<dbReference type="RefSeq" id="WP_011363064.1">
    <property type="nucleotide sequence ID" value="NC_007516.1"/>
</dbReference>
<dbReference type="SMR" id="Q3ANN0"/>
<dbReference type="STRING" id="110662.Syncc9605_0023"/>
<dbReference type="KEGG" id="syd:Syncc9605_0023"/>
<dbReference type="eggNOG" id="COG0576">
    <property type="taxonomic scope" value="Bacteria"/>
</dbReference>
<dbReference type="HOGENOM" id="CLU_057217_5_1_3"/>
<dbReference type="OrthoDB" id="9812586at2"/>
<dbReference type="GO" id="GO:0005737">
    <property type="term" value="C:cytoplasm"/>
    <property type="evidence" value="ECO:0007669"/>
    <property type="project" value="UniProtKB-SubCell"/>
</dbReference>
<dbReference type="GO" id="GO:0000774">
    <property type="term" value="F:adenyl-nucleotide exchange factor activity"/>
    <property type="evidence" value="ECO:0007669"/>
    <property type="project" value="InterPro"/>
</dbReference>
<dbReference type="GO" id="GO:0042803">
    <property type="term" value="F:protein homodimerization activity"/>
    <property type="evidence" value="ECO:0007669"/>
    <property type="project" value="InterPro"/>
</dbReference>
<dbReference type="GO" id="GO:0051087">
    <property type="term" value="F:protein-folding chaperone binding"/>
    <property type="evidence" value="ECO:0007669"/>
    <property type="project" value="InterPro"/>
</dbReference>
<dbReference type="GO" id="GO:0051082">
    <property type="term" value="F:unfolded protein binding"/>
    <property type="evidence" value="ECO:0007669"/>
    <property type="project" value="TreeGrafter"/>
</dbReference>
<dbReference type="GO" id="GO:0006457">
    <property type="term" value="P:protein folding"/>
    <property type="evidence" value="ECO:0007669"/>
    <property type="project" value="InterPro"/>
</dbReference>
<dbReference type="CDD" id="cd00446">
    <property type="entry name" value="GrpE"/>
    <property type="match status" value="1"/>
</dbReference>
<dbReference type="FunFam" id="2.30.22.10:FF:000001">
    <property type="entry name" value="Protein GrpE"/>
    <property type="match status" value="1"/>
</dbReference>
<dbReference type="Gene3D" id="3.90.20.20">
    <property type="match status" value="1"/>
</dbReference>
<dbReference type="Gene3D" id="2.30.22.10">
    <property type="entry name" value="Head domain of nucleotide exchange factor GrpE"/>
    <property type="match status" value="1"/>
</dbReference>
<dbReference type="HAMAP" id="MF_01151">
    <property type="entry name" value="GrpE"/>
    <property type="match status" value="1"/>
</dbReference>
<dbReference type="InterPro" id="IPR000740">
    <property type="entry name" value="GrpE"/>
</dbReference>
<dbReference type="InterPro" id="IPR013805">
    <property type="entry name" value="GrpE_coiled_coil"/>
</dbReference>
<dbReference type="InterPro" id="IPR009012">
    <property type="entry name" value="GrpE_head"/>
</dbReference>
<dbReference type="NCBIfam" id="NF010738">
    <property type="entry name" value="PRK14140.1"/>
    <property type="match status" value="1"/>
</dbReference>
<dbReference type="NCBIfam" id="NF010741">
    <property type="entry name" value="PRK14143.1"/>
    <property type="match status" value="1"/>
</dbReference>
<dbReference type="PANTHER" id="PTHR21237">
    <property type="entry name" value="GRPE PROTEIN"/>
    <property type="match status" value="1"/>
</dbReference>
<dbReference type="PANTHER" id="PTHR21237:SF23">
    <property type="entry name" value="GRPE PROTEIN HOMOLOG, MITOCHONDRIAL"/>
    <property type="match status" value="1"/>
</dbReference>
<dbReference type="Pfam" id="PF01025">
    <property type="entry name" value="GrpE"/>
    <property type="match status" value="1"/>
</dbReference>
<dbReference type="PRINTS" id="PR00773">
    <property type="entry name" value="GRPEPROTEIN"/>
</dbReference>
<dbReference type="SUPFAM" id="SSF58014">
    <property type="entry name" value="Coiled-coil domain of nucleotide exchange factor GrpE"/>
    <property type="match status" value="1"/>
</dbReference>
<dbReference type="SUPFAM" id="SSF51064">
    <property type="entry name" value="Head domain of nucleotide exchange factor GrpE"/>
    <property type="match status" value="1"/>
</dbReference>
<dbReference type="PROSITE" id="PS01071">
    <property type="entry name" value="GRPE"/>
    <property type="match status" value="1"/>
</dbReference>